<comment type="similarity">
    <text evidence="1">Belongs to the eukaryotic ribosomal protein eL27 family.</text>
</comment>
<keyword id="KW-0687">Ribonucleoprotein</keyword>
<keyword id="KW-0689">Ribosomal protein</keyword>
<reference key="1">
    <citation type="journal article" date="1993" name="Plant Physiol.">
        <title>Nucleotide sequence of a cDNA encoding ribosomal protein L27 from Chlamydobotrys stellata.</title>
        <authorList>
            <person name="Wolf A.H."/>
            <person name="Kirsch M."/>
            <person name="Wiessner W."/>
        </authorList>
    </citation>
    <scope>NUCLEOTIDE SEQUENCE [MRNA]</scope>
</reference>
<sequence length="134" mass="15408">MVKFLKSGKVVVVLSGRFAGKKAVIVRNFDDGTSSRPYGHALVVGLQKEPRKVTKRQSQKKQAKKSTLKTFIKTVNYNHLMPTRYTLDVDFKGVAAEAQENPTKKVEARKECKKLLEEKFKTGKNRWFFTKLRF</sequence>
<protein>
    <recommendedName>
        <fullName evidence="1">Large ribosomal subunit protein eL27</fullName>
    </recommendedName>
    <alternativeName>
        <fullName>60S ribosomal protein L27</fullName>
    </alternativeName>
</protein>
<evidence type="ECO:0000305" key="1"/>
<name>RL27_PYRST</name>
<feature type="chain" id="PRO_0000126088" description="Large ribosomal subunit protein eL27">
    <location>
        <begin position="1"/>
        <end position="134"/>
    </location>
</feature>
<feature type="domain" description="KOW">
    <location>
        <begin position="5"/>
        <end position="40"/>
    </location>
</feature>
<dbReference type="EMBL" id="X68202">
    <property type="protein sequence ID" value="CAA48289.1"/>
    <property type="molecule type" value="mRNA"/>
</dbReference>
<dbReference type="PIR" id="S26612">
    <property type="entry name" value="S26612"/>
</dbReference>
<dbReference type="SMR" id="Q02984"/>
<dbReference type="GO" id="GO:1990904">
    <property type="term" value="C:ribonucleoprotein complex"/>
    <property type="evidence" value="ECO:0007669"/>
    <property type="project" value="UniProtKB-KW"/>
</dbReference>
<dbReference type="GO" id="GO:0005840">
    <property type="term" value="C:ribosome"/>
    <property type="evidence" value="ECO:0007669"/>
    <property type="project" value="UniProtKB-KW"/>
</dbReference>
<dbReference type="GO" id="GO:0003735">
    <property type="term" value="F:structural constituent of ribosome"/>
    <property type="evidence" value="ECO:0007669"/>
    <property type="project" value="InterPro"/>
</dbReference>
<dbReference type="GO" id="GO:0006412">
    <property type="term" value="P:translation"/>
    <property type="evidence" value="ECO:0007669"/>
    <property type="project" value="InterPro"/>
</dbReference>
<dbReference type="CDD" id="cd06090">
    <property type="entry name" value="KOW_RPL27"/>
    <property type="match status" value="1"/>
</dbReference>
<dbReference type="FunFam" id="2.30.30.770:FF:000001">
    <property type="entry name" value="60S ribosomal protein L27"/>
    <property type="match status" value="1"/>
</dbReference>
<dbReference type="Gene3D" id="2.30.30.770">
    <property type="match status" value="1"/>
</dbReference>
<dbReference type="InterPro" id="IPR005824">
    <property type="entry name" value="KOW"/>
</dbReference>
<dbReference type="InterPro" id="IPR001141">
    <property type="entry name" value="Ribosomal_eL27"/>
</dbReference>
<dbReference type="InterPro" id="IPR018262">
    <property type="entry name" value="Ribosomal_eL27_CS"/>
</dbReference>
<dbReference type="InterPro" id="IPR041991">
    <property type="entry name" value="Ribosomal_eL27_KOW"/>
</dbReference>
<dbReference type="InterPro" id="IPR038655">
    <property type="entry name" value="Ribosomal_eL27_sf"/>
</dbReference>
<dbReference type="InterPro" id="IPR008991">
    <property type="entry name" value="Translation_prot_SH3-like_sf"/>
</dbReference>
<dbReference type="PANTHER" id="PTHR10497">
    <property type="entry name" value="60S RIBOSOMAL PROTEIN L27"/>
    <property type="match status" value="1"/>
</dbReference>
<dbReference type="Pfam" id="PF00467">
    <property type="entry name" value="KOW"/>
    <property type="match status" value="1"/>
</dbReference>
<dbReference type="Pfam" id="PF01777">
    <property type="entry name" value="Ribosomal_L27e"/>
    <property type="match status" value="1"/>
</dbReference>
<dbReference type="SMART" id="SM00739">
    <property type="entry name" value="KOW"/>
    <property type="match status" value="1"/>
</dbReference>
<dbReference type="SUPFAM" id="SSF50104">
    <property type="entry name" value="Translation proteins SH3-like domain"/>
    <property type="match status" value="1"/>
</dbReference>
<dbReference type="PROSITE" id="PS01107">
    <property type="entry name" value="RIBOSOMAL_L27E"/>
    <property type="match status" value="1"/>
</dbReference>
<gene>
    <name type="primary">RPL27</name>
</gene>
<accession>Q02984</accession>
<organism>
    <name type="scientific">Pyrobotrys stellatus</name>
    <name type="common">Green alga</name>
    <name type="synonym">Chlamydobotrys stellata</name>
    <dbReference type="NCBI Taxonomy" id="3064"/>
    <lineage>
        <taxon>Eukaryota</taxon>
        <taxon>Viridiplantae</taxon>
        <taxon>Chlorophyta</taxon>
        <taxon>core chlorophytes</taxon>
        <taxon>Chlorophyceae</taxon>
        <taxon>CS clade</taxon>
        <taxon>Chlamydomonadales</taxon>
        <taxon>Spondylomoraceae</taxon>
        <taxon>Pyrobotrys</taxon>
    </lineage>
</organism>
<proteinExistence type="evidence at transcript level"/>